<sequence>MSAEDPNAGEDADAEEEEDIRYFVRIGQTDLDGTKSVERALTELNGIGHRAARIIAQKADVDRRAVFGKLDDDVIERVVERVENFADDVPEWMTNHQKDYFTGETTHETGNDLQLTRRQDINRMKMIDSYRGVRHKRGQKVRGQRTKSTGRTEGTIGVNVEAIKEEQAEDAAAEDDE</sequence>
<accession>Q00861</accession>
<accession>Q5V5R2</accession>
<name>RS13_HALMA</name>
<keyword id="KW-1185">Reference proteome</keyword>
<keyword id="KW-0687">Ribonucleoprotein</keyword>
<keyword id="KW-0689">Ribosomal protein</keyword>
<keyword id="KW-0694">RNA-binding</keyword>
<keyword id="KW-0699">rRNA-binding</keyword>
<comment type="function">
    <text evidence="1">Located at the top of the head of the 30S subunit, it contacts several helices of the 16S rRNA. In the 70S ribosome it contacts the 23S rRNA (bridge B1a) and protein L5 of the 50S subunit (bridge B1b), connecting the 2 subunits; these bridges are implicated in subunit movement.</text>
</comment>
<comment type="subunit">
    <text evidence="1">Part of the 30S ribosomal subunit. Forms a loose heterodimer with protein S19. Forms two bridges to the 50S subunit in the 70S ribosome.</text>
</comment>
<comment type="similarity">
    <text evidence="1">Belongs to the universal ribosomal protein uS13 family.</text>
</comment>
<feature type="chain" id="PRO_0000132178" description="Small ribosomal subunit protein uS13">
    <location>
        <begin position="1"/>
        <end position="177"/>
    </location>
</feature>
<feature type="region of interest" description="Disordered" evidence="2">
    <location>
        <begin position="132"/>
        <end position="177"/>
    </location>
</feature>
<feature type="compositionally biased region" description="Basic residues" evidence="2">
    <location>
        <begin position="132"/>
        <end position="145"/>
    </location>
</feature>
<feature type="compositionally biased region" description="Acidic residues" evidence="2">
    <location>
        <begin position="167"/>
        <end position="177"/>
    </location>
</feature>
<evidence type="ECO:0000255" key="1">
    <source>
        <dbReference type="HAMAP-Rule" id="MF_01315"/>
    </source>
</evidence>
<evidence type="ECO:0000256" key="2">
    <source>
        <dbReference type="SAM" id="MobiDB-lite"/>
    </source>
</evidence>
<evidence type="ECO:0000305" key="3"/>
<protein>
    <recommendedName>
        <fullName evidence="1">Small ribosomal subunit protein uS13</fullName>
    </recommendedName>
    <alternativeName>
        <fullName evidence="3">30S ribosomal protein S13</fullName>
    </alternativeName>
    <alternativeName>
        <fullName>HmaS13</fullName>
    </alternativeName>
</protein>
<dbReference type="EMBL" id="M87833">
    <property type="protein sequence ID" value="AAA73209.1"/>
    <property type="molecule type" value="Genomic_DNA"/>
</dbReference>
<dbReference type="EMBL" id="AY596297">
    <property type="protein sequence ID" value="AAV45140.1"/>
    <property type="molecule type" value="Genomic_DNA"/>
</dbReference>
<dbReference type="PIR" id="A44126">
    <property type="entry name" value="A44126"/>
</dbReference>
<dbReference type="RefSeq" id="WP_004963348.1">
    <property type="nucleotide sequence ID" value="NZ_CP039138.1"/>
</dbReference>
<dbReference type="SMR" id="Q00861"/>
<dbReference type="STRING" id="272569.rrnAC0058"/>
<dbReference type="PaxDb" id="272569-rrnAC0058"/>
<dbReference type="EnsemblBacteria" id="AAV45140">
    <property type="protein sequence ID" value="AAV45140"/>
    <property type="gene ID" value="rrnAC0058"/>
</dbReference>
<dbReference type="KEGG" id="hma:rrnAC0058"/>
<dbReference type="PATRIC" id="fig|272569.17.peg.868"/>
<dbReference type="eggNOG" id="arCOG01722">
    <property type="taxonomic scope" value="Archaea"/>
</dbReference>
<dbReference type="HOGENOM" id="CLU_103849_0_0_2"/>
<dbReference type="Proteomes" id="UP000001169">
    <property type="component" value="Chromosome I"/>
</dbReference>
<dbReference type="GO" id="GO:0005829">
    <property type="term" value="C:cytosol"/>
    <property type="evidence" value="ECO:0007669"/>
    <property type="project" value="TreeGrafter"/>
</dbReference>
<dbReference type="GO" id="GO:0015935">
    <property type="term" value="C:small ribosomal subunit"/>
    <property type="evidence" value="ECO:0007669"/>
    <property type="project" value="TreeGrafter"/>
</dbReference>
<dbReference type="GO" id="GO:0019843">
    <property type="term" value="F:rRNA binding"/>
    <property type="evidence" value="ECO:0007669"/>
    <property type="project" value="UniProtKB-UniRule"/>
</dbReference>
<dbReference type="GO" id="GO:0003735">
    <property type="term" value="F:structural constituent of ribosome"/>
    <property type="evidence" value="ECO:0007669"/>
    <property type="project" value="InterPro"/>
</dbReference>
<dbReference type="GO" id="GO:0006412">
    <property type="term" value="P:translation"/>
    <property type="evidence" value="ECO:0007669"/>
    <property type="project" value="UniProtKB-UniRule"/>
</dbReference>
<dbReference type="Gene3D" id="1.10.8.50">
    <property type="match status" value="1"/>
</dbReference>
<dbReference type="Gene3D" id="4.10.910.10">
    <property type="entry name" value="30s ribosomal protein s13, domain 2"/>
    <property type="match status" value="1"/>
</dbReference>
<dbReference type="HAMAP" id="MF_01315">
    <property type="entry name" value="Ribosomal_uS13"/>
    <property type="match status" value="1"/>
</dbReference>
<dbReference type="InterPro" id="IPR027437">
    <property type="entry name" value="Rbsml_uS13_C"/>
</dbReference>
<dbReference type="InterPro" id="IPR001892">
    <property type="entry name" value="Ribosomal_uS13"/>
</dbReference>
<dbReference type="InterPro" id="IPR010979">
    <property type="entry name" value="Ribosomal_uS13-like_H2TH"/>
</dbReference>
<dbReference type="InterPro" id="IPR019977">
    <property type="entry name" value="Ribosomal_uS13_archaeal"/>
</dbReference>
<dbReference type="InterPro" id="IPR018269">
    <property type="entry name" value="Ribosomal_uS13_CS"/>
</dbReference>
<dbReference type="NCBIfam" id="NF003140">
    <property type="entry name" value="PRK04053.1"/>
    <property type="match status" value="1"/>
</dbReference>
<dbReference type="NCBIfam" id="TIGR03629">
    <property type="entry name" value="uS13_arch"/>
    <property type="match status" value="1"/>
</dbReference>
<dbReference type="PANTHER" id="PTHR10871">
    <property type="entry name" value="30S RIBOSOMAL PROTEIN S13/40S RIBOSOMAL PROTEIN S18"/>
    <property type="match status" value="1"/>
</dbReference>
<dbReference type="PANTHER" id="PTHR10871:SF3">
    <property type="entry name" value="SMALL RIBOSOMAL SUBUNIT PROTEIN US13"/>
    <property type="match status" value="1"/>
</dbReference>
<dbReference type="Pfam" id="PF00416">
    <property type="entry name" value="Ribosomal_S13"/>
    <property type="match status" value="1"/>
</dbReference>
<dbReference type="PIRSF" id="PIRSF002134">
    <property type="entry name" value="Ribosomal_S13"/>
    <property type="match status" value="1"/>
</dbReference>
<dbReference type="SUPFAM" id="SSF46946">
    <property type="entry name" value="S13-like H2TH domain"/>
    <property type="match status" value="1"/>
</dbReference>
<dbReference type="PROSITE" id="PS00646">
    <property type="entry name" value="RIBOSOMAL_S13_1"/>
    <property type="match status" value="1"/>
</dbReference>
<dbReference type="PROSITE" id="PS50159">
    <property type="entry name" value="RIBOSOMAL_S13_2"/>
    <property type="match status" value="1"/>
</dbReference>
<proteinExistence type="inferred from homology"/>
<organism>
    <name type="scientific">Haloarcula marismortui (strain ATCC 43049 / DSM 3752 / JCM 8966 / VKM B-1809)</name>
    <name type="common">Halobacterium marismortui</name>
    <dbReference type="NCBI Taxonomy" id="272569"/>
    <lineage>
        <taxon>Archaea</taxon>
        <taxon>Methanobacteriati</taxon>
        <taxon>Methanobacteriota</taxon>
        <taxon>Stenosarchaea group</taxon>
        <taxon>Halobacteria</taxon>
        <taxon>Halobacteriales</taxon>
        <taxon>Haloarculaceae</taxon>
        <taxon>Haloarcula</taxon>
    </lineage>
</organism>
<reference key="1">
    <citation type="journal article" date="1992" name="J. Biol. Chem.">
        <title>The alpha-operon equivalent genome region in the extreme halophilic archaebacterium Haloarcula (Halobacterium) marismortui.</title>
        <authorList>
            <person name="Scholzen T."/>
            <person name="Arndt E."/>
        </authorList>
    </citation>
    <scope>NUCLEOTIDE SEQUENCE [GENOMIC DNA]</scope>
</reference>
<reference key="2">
    <citation type="journal article" date="2004" name="Genome Res.">
        <title>Genome sequence of Haloarcula marismortui: a halophilic archaeon from the Dead Sea.</title>
        <authorList>
            <person name="Baliga N.S."/>
            <person name="Bonneau R."/>
            <person name="Facciotti M.T."/>
            <person name="Pan M."/>
            <person name="Glusman G."/>
            <person name="Deutsch E.W."/>
            <person name="Shannon P."/>
            <person name="Chiu Y."/>
            <person name="Weng R.S."/>
            <person name="Gan R.R."/>
            <person name="Hung P."/>
            <person name="Date S.V."/>
            <person name="Marcotte E."/>
            <person name="Hood L."/>
            <person name="Ng W.V."/>
        </authorList>
    </citation>
    <scope>NUCLEOTIDE SEQUENCE [LARGE SCALE GENOMIC DNA]</scope>
    <source>
        <strain>ATCC 43049 / DSM 3752 / JCM 8966 / VKM B-1809</strain>
    </source>
</reference>
<gene>
    <name evidence="1" type="primary">rps13</name>
    <name type="ordered locus">rrnAC0058</name>
</gene>